<name>DPO3X_SALTY</name>
<dbReference type="EC" id="2.7.7.7"/>
<dbReference type="EMBL" id="U66040">
    <property type="protein sequence ID" value="AAC97559.1"/>
    <property type="molecule type" value="Genomic_DNA"/>
</dbReference>
<dbReference type="EMBL" id="U66040">
    <property type="protein sequence ID" value="AAC97558.1"/>
    <property type="molecule type" value="Genomic_DNA"/>
</dbReference>
<dbReference type="EMBL" id="AE006468">
    <property type="protein sequence ID" value="AAL19438.1"/>
    <property type="molecule type" value="Genomic_DNA"/>
</dbReference>
<dbReference type="RefSeq" id="NP_459479.1">
    <molecule id="P74876-1"/>
    <property type="nucleotide sequence ID" value="NC_003197.2"/>
</dbReference>
<dbReference type="RefSeq" id="WP_000121962.1">
    <property type="nucleotide sequence ID" value="NC_003197.2"/>
</dbReference>
<dbReference type="SMR" id="P74876"/>
<dbReference type="STRING" id="99287.STM0484"/>
<dbReference type="PaxDb" id="99287-STM0484"/>
<dbReference type="GeneID" id="1252004"/>
<dbReference type="KEGG" id="stm:STM0484"/>
<dbReference type="PATRIC" id="fig|99287.12.peg.517"/>
<dbReference type="HOGENOM" id="CLU_006229_6_0_6"/>
<dbReference type="OMA" id="YALHQGN"/>
<dbReference type="PhylomeDB" id="P74876"/>
<dbReference type="BioCyc" id="SENT99287:STM0484-MONOMER"/>
<dbReference type="Proteomes" id="UP000001014">
    <property type="component" value="Chromosome"/>
</dbReference>
<dbReference type="GO" id="GO:0009360">
    <property type="term" value="C:DNA polymerase III complex"/>
    <property type="evidence" value="ECO:0007669"/>
    <property type="project" value="InterPro"/>
</dbReference>
<dbReference type="GO" id="GO:0005524">
    <property type="term" value="F:ATP binding"/>
    <property type="evidence" value="ECO:0007669"/>
    <property type="project" value="UniProtKB-KW"/>
</dbReference>
<dbReference type="GO" id="GO:0016887">
    <property type="term" value="F:ATP hydrolysis activity"/>
    <property type="evidence" value="ECO:0007669"/>
    <property type="project" value="InterPro"/>
</dbReference>
<dbReference type="GO" id="GO:0003677">
    <property type="term" value="F:DNA binding"/>
    <property type="evidence" value="ECO:0007669"/>
    <property type="project" value="InterPro"/>
</dbReference>
<dbReference type="GO" id="GO:0003887">
    <property type="term" value="F:DNA-directed DNA polymerase activity"/>
    <property type="evidence" value="ECO:0007669"/>
    <property type="project" value="UniProtKB-KW"/>
</dbReference>
<dbReference type="GO" id="GO:0046872">
    <property type="term" value="F:metal ion binding"/>
    <property type="evidence" value="ECO:0007669"/>
    <property type="project" value="UniProtKB-KW"/>
</dbReference>
<dbReference type="GO" id="GO:0006261">
    <property type="term" value="P:DNA-templated DNA replication"/>
    <property type="evidence" value="ECO:0000318"/>
    <property type="project" value="GO_Central"/>
</dbReference>
<dbReference type="GO" id="GO:0075523">
    <property type="term" value="P:viral translational frameshifting"/>
    <property type="evidence" value="ECO:0007669"/>
    <property type="project" value="UniProtKB-KW"/>
</dbReference>
<dbReference type="CDD" id="cd00009">
    <property type="entry name" value="AAA"/>
    <property type="match status" value="1"/>
</dbReference>
<dbReference type="CDD" id="cd18137">
    <property type="entry name" value="HLD_clamp_pol_III_gamma_tau"/>
    <property type="match status" value="1"/>
</dbReference>
<dbReference type="FunFam" id="1.10.8.60:FF:000013">
    <property type="entry name" value="DNA polymerase III subunit gamma/tau"/>
    <property type="match status" value="1"/>
</dbReference>
<dbReference type="FunFam" id="1.20.272.10:FF:000003">
    <property type="entry name" value="DNA polymerase III subunit gamma/tau"/>
    <property type="match status" value="1"/>
</dbReference>
<dbReference type="FunFam" id="3.30.300.150:FF:000001">
    <property type="entry name" value="DNA polymerase III subunit gamma/tau"/>
    <property type="match status" value="1"/>
</dbReference>
<dbReference type="FunFam" id="3.40.50.300:FF:000014">
    <property type="entry name" value="DNA polymerase III subunit gamma/tau"/>
    <property type="match status" value="1"/>
</dbReference>
<dbReference type="Gene3D" id="1.10.8.60">
    <property type="match status" value="1"/>
</dbReference>
<dbReference type="Gene3D" id="1.20.272.10">
    <property type="match status" value="1"/>
</dbReference>
<dbReference type="Gene3D" id="3.30.300.150">
    <property type="entry name" value="DNA polymerase III, tau subunit, domain V"/>
    <property type="match status" value="1"/>
</dbReference>
<dbReference type="Gene3D" id="3.40.50.300">
    <property type="entry name" value="P-loop containing nucleotide triphosphate hydrolases"/>
    <property type="match status" value="1"/>
</dbReference>
<dbReference type="InterPro" id="IPR003593">
    <property type="entry name" value="AAA+_ATPase"/>
</dbReference>
<dbReference type="InterPro" id="IPR001270">
    <property type="entry name" value="ClpA/B"/>
</dbReference>
<dbReference type="InterPro" id="IPR008921">
    <property type="entry name" value="DNA_pol3_clamp-load_cplx_C"/>
</dbReference>
<dbReference type="InterPro" id="IPR022001">
    <property type="entry name" value="DNA_pol3_tau_IV"/>
</dbReference>
<dbReference type="InterPro" id="IPR022754">
    <property type="entry name" value="DNA_pol_III_gamma-3"/>
</dbReference>
<dbReference type="InterPro" id="IPR012763">
    <property type="entry name" value="DNA_pol_III_sug/sutau_N"/>
</dbReference>
<dbReference type="InterPro" id="IPR021029">
    <property type="entry name" value="DNA_pol_III_tau_dom-5"/>
</dbReference>
<dbReference type="InterPro" id="IPR050238">
    <property type="entry name" value="DNA_Rep/Repair_Clamp_Loader"/>
</dbReference>
<dbReference type="InterPro" id="IPR045085">
    <property type="entry name" value="HLD_clamp_pol_III_gamma_tau"/>
</dbReference>
<dbReference type="InterPro" id="IPR027417">
    <property type="entry name" value="P-loop_NTPase"/>
</dbReference>
<dbReference type="InterPro" id="IPR038249">
    <property type="entry name" value="PolIII_tau_V_sf"/>
</dbReference>
<dbReference type="NCBIfam" id="TIGR02397">
    <property type="entry name" value="dnaX_nterm"/>
    <property type="match status" value="1"/>
</dbReference>
<dbReference type="NCBIfam" id="NF004046">
    <property type="entry name" value="PRK05563.1"/>
    <property type="match status" value="1"/>
</dbReference>
<dbReference type="NCBIfam" id="NF005942">
    <property type="entry name" value="PRK07994.1"/>
    <property type="match status" value="1"/>
</dbReference>
<dbReference type="PANTHER" id="PTHR11669:SF0">
    <property type="entry name" value="PROTEIN STICHEL-LIKE 2"/>
    <property type="match status" value="1"/>
</dbReference>
<dbReference type="PANTHER" id="PTHR11669">
    <property type="entry name" value="REPLICATION FACTOR C / DNA POLYMERASE III GAMMA-TAU SUBUNIT"/>
    <property type="match status" value="1"/>
</dbReference>
<dbReference type="Pfam" id="PF13177">
    <property type="entry name" value="DNA_pol3_delta2"/>
    <property type="match status" value="1"/>
</dbReference>
<dbReference type="Pfam" id="PF12169">
    <property type="entry name" value="DNA_pol3_gamma3"/>
    <property type="match status" value="1"/>
</dbReference>
<dbReference type="Pfam" id="PF12168">
    <property type="entry name" value="DNA_pol3_tau_4"/>
    <property type="match status" value="1"/>
</dbReference>
<dbReference type="Pfam" id="PF12170">
    <property type="entry name" value="DNA_pol3_tau_5"/>
    <property type="match status" value="1"/>
</dbReference>
<dbReference type="Pfam" id="PF22608">
    <property type="entry name" value="DNAX_ATPase_lid"/>
    <property type="match status" value="1"/>
</dbReference>
<dbReference type="PRINTS" id="PR00300">
    <property type="entry name" value="CLPPROTEASEA"/>
</dbReference>
<dbReference type="SMART" id="SM00382">
    <property type="entry name" value="AAA"/>
    <property type="match status" value="1"/>
</dbReference>
<dbReference type="SUPFAM" id="SSF52540">
    <property type="entry name" value="P-loop containing nucleoside triphosphate hydrolases"/>
    <property type="match status" value="1"/>
</dbReference>
<dbReference type="SUPFAM" id="SSF48019">
    <property type="entry name" value="post-AAA+ oligomerization domain-like"/>
    <property type="match status" value="1"/>
</dbReference>
<sequence length="642" mass="70596">MSYQVLARKWRPQTFADVVGQEHVLTALANGLSLGRIHHAYLFSGTRGVGKTSIARLLAKGLNCETGITATPCGVCDNCREIEQGRFVDLIEIDAASRTKVEDTRDLLDNVQYAPARGRFKVYLIDEVHMLSRHSFNALLKTLEEPPAHVKFLLATTDPQKLPVTILSRCLQFHLKALDVEQIRHQLEHILNEEHIAHEPRALQLLSRAADGSLRDALSLTDQAIASGDGQVSTQAVSAMLGTLDDDQALSLVEAVVDANGERVMSLINEAAARGIEWEALLVEMLSLLHRIAMVQLSPAALGSDMAAIEQRMRELARTVPPGDLQLYYQTLLIGRKELPWAPDRRMGVEMTLLRALAFHPRMPLPEPETPRQSFAPVAPTAVMTPPQLQQPSAPAPQTSPAPLPASTSQVLAARNQLQRAQGVTKTKKSEPAAASRARPVNNSALERLASVSERVQARPAPSALETAPVKKEAYRWKATTPVVQTKEVVATPKALKKALEHEKTPELAAKLAAEAIERDPWAAQVSQLSLPKLVEQVALNAWKEQNGNAVCLHLRSTQRHLNSSGAQQKLAQALSDLTGTTVELTIVEDDNPAVRTPLEWRQAIYEEKLAQARESIIADNNIQTLRRFFDAELDEESIRPI</sequence>
<organism>
    <name type="scientific">Salmonella typhimurium (strain LT2 / SGSC1412 / ATCC 700720)</name>
    <dbReference type="NCBI Taxonomy" id="99287"/>
    <lineage>
        <taxon>Bacteria</taxon>
        <taxon>Pseudomonadati</taxon>
        <taxon>Pseudomonadota</taxon>
        <taxon>Gammaproteobacteria</taxon>
        <taxon>Enterobacterales</taxon>
        <taxon>Enterobacteriaceae</taxon>
        <taxon>Salmonella</taxon>
    </lineage>
</organism>
<proteinExistence type="inferred from homology"/>
<protein>
    <recommendedName>
        <fullName>DNA polymerase III subunit tau</fullName>
        <ecNumber>2.7.7.7</ecNumber>
    </recommendedName>
    <alternativeName>
        <fullName>DNA polymerase III subunit gamma</fullName>
    </alternativeName>
</protein>
<feature type="chain" id="PRO_0000007362" description="DNA polymerase III subunit tau">
    <location>
        <begin position="1"/>
        <end position="642"/>
    </location>
</feature>
<feature type="region of interest" description="Disordered" evidence="4">
    <location>
        <begin position="385"/>
        <end position="441"/>
    </location>
</feature>
<feature type="compositionally biased region" description="Pro residues" evidence="4">
    <location>
        <begin position="394"/>
        <end position="404"/>
    </location>
</feature>
<feature type="compositionally biased region" description="Polar residues" evidence="4">
    <location>
        <begin position="416"/>
        <end position="425"/>
    </location>
</feature>
<feature type="binding site" evidence="3">
    <location>
        <begin position="45"/>
        <end position="52"/>
    </location>
    <ligand>
        <name>ATP</name>
        <dbReference type="ChEBI" id="CHEBI:30616"/>
    </ligand>
</feature>
<feature type="binding site" evidence="2">
    <location>
        <position position="64"/>
    </location>
    <ligand>
        <name>Zn(2+)</name>
        <dbReference type="ChEBI" id="CHEBI:29105"/>
    </ligand>
</feature>
<feature type="binding site" evidence="2">
    <location>
        <position position="73"/>
    </location>
    <ligand>
        <name>Zn(2+)</name>
        <dbReference type="ChEBI" id="CHEBI:29105"/>
    </ligand>
</feature>
<feature type="binding site" evidence="2">
    <location>
        <position position="76"/>
    </location>
    <ligand>
        <name>Zn(2+)</name>
        <dbReference type="ChEBI" id="CHEBI:29105"/>
    </ligand>
</feature>
<feature type="binding site" evidence="2">
    <location>
        <position position="79"/>
    </location>
    <ligand>
        <name>Zn(2+)</name>
        <dbReference type="ChEBI" id="CHEBI:29105"/>
    </ligand>
</feature>
<feature type="splice variant" id="VSP_042850" description="In isoform gamma." evidence="5">
    <location>
        <begin position="431"/>
        <end position="642"/>
    </location>
</feature>
<feature type="sequence conflict" description="In Ref. 1; AAC97559/AAC97558." evidence="5" ref="1">
    <original>IA</original>
    <variation>SS</variation>
    <location>
        <begin position="225"/>
        <end position="226"/>
    </location>
</feature>
<feature type="sequence conflict" description="In Ref. 1; AAC97559/AAC97558." evidence="5" ref="1">
    <original>A</original>
    <variation>C</variation>
    <location>
        <position position="317"/>
    </location>
</feature>
<feature type="sequence conflict" description="In Ref. 1; AAC97559/AAC97558." evidence="5" ref="1">
    <original>Y</original>
    <variation>H</variation>
    <location>
        <position position="329"/>
    </location>
</feature>
<feature type="sequence conflict" description="In Ref. 1; AAC97559/AAC97558." evidence="5" ref="1">
    <original>L</original>
    <variation>F</variation>
    <location>
        <position position="339"/>
    </location>
</feature>
<reference key="1">
    <citation type="journal article" date="1997" name="J. Bacteriol.">
        <title>Conservation of the Escherichia coli dnaX programmed ribosomal frameshift signal in Salmonella typhimurium.</title>
        <authorList>
            <person name="Blinkova A."/>
            <person name="Burkart M.F."/>
            <person name="Owens T.D."/>
            <person name="Walker J.R."/>
        </authorList>
    </citation>
    <scope>NUCLEOTIDE SEQUENCE [GENOMIC DNA]</scope>
    <scope>POSSIBLE RIBOSOMAL FRAMESHIFT</scope>
    <source>
        <strain>DB9005</strain>
    </source>
</reference>
<reference key="2">
    <citation type="journal article" date="2001" name="Nature">
        <title>Complete genome sequence of Salmonella enterica serovar Typhimurium LT2.</title>
        <authorList>
            <person name="McClelland M."/>
            <person name="Sanderson K.E."/>
            <person name="Spieth J."/>
            <person name="Clifton S.W."/>
            <person name="Latreille P."/>
            <person name="Courtney L."/>
            <person name="Porwollik S."/>
            <person name="Ali J."/>
            <person name="Dante M."/>
            <person name="Du F."/>
            <person name="Hou S."/>
            <person name="Layman D."/>
            <person name="Leonard S."/>
            <person name="Nguyen C."/>
            <person name="Scott K."/>
            <person name="Holmes A."/>
            <person name="Grewal N."/>
            <person name="Mulvaney E."/>
            <person name="Ryan E."/>
            <person name="Sun H."/>
            <person name="Florea L."/>
            <person name="Miller W."/>
            <person name="Stoneking T."/>
            <person name="Nhan M."/>
            <person name="Waterston R."/>
            <person name="Wilson R.K."/>
        </authorList>
    </citation>
    <scope>NUCLEOTIDE SEQUENCE [LARGE SCALE GENOMIC DNA]</scope>
    <source>
        <strain>LT2 / SGSC1412 / ATCC 700720</strain>
    </source>
</reference>
<evidence type="ECO:0000250" key="1"/>
<evidence type="ECO:0000250" key="2">
    <source>
        <dbReference type="UniProtKB" id="P06710"/>
    </source>
</evidence>
<evidence type="ECO:0000255" key="3"/>
<evidence type="ECO:0000256" key="4">
    <source>
        <dbReference type="SAM" id="MobiDB-lite"/>
    </source>
</evidence>
<evidence type="ECO:0000305" key="5"/>
<keyword id="KW-0067">ATP-binding</keyword>
<keyword id="KW-0235">DNA replication</keyword>
<keyword id="KW-0239">DNA-directed DNA polymerase</keyword>
<keyword id="KW-0479">Metal-binding</keyword>
<keyword id="KW-0547">Nucleotide-binding</keyword>
<keyword id="KW-0548">Nucleotidyltransferase</keyword>
<keyword id="KW-1185">Reference proteome</keyword>
<keyword id="KW-0688">Ribosomal frameshifting</keyword>
<keyword id="KW-0808">Transferase</keyword>
<keyword id="KW-0862">Zinc</keyword>
<comment type="function">
    <text evidence="1">DNA polymerase III is a complex, multichain enzyme responsible for most of the replicative synthesis in bacteria. This DNA polymerase also exhibits 3' to 5' exonuclease activity (By similarity).</text>
</comment>
<comment type="function">
    <molecule>Isoform tau</molecule>
    <text evidence="1">Serves as a scaffold to help in the dimerization of the core complex.</text>
</comment>
<comment type="function">
    <molecule>Isoform gamma</molecule>
    <text evidence="1">Seems to interact with the delta subunit to transfer the beta subunit on the DNA.</text>
</comment>
<comment type="catalytic activity">
    <reaction>
        <text>DNA(n) + a 2'-deoxyribonucleoside 5'-triphosphate = DNA(n+1) + diphosphate</text>
        <dbReference type="Rhea" id="RHEA:22508"/>
        <dbReference type="Rhea" id="RHEA-COMP:17339"/>
        <dbReference type="Rhea" id="RHEA-COMP:17340"/>
        <dbReference type="ChEBI" id="CHEBI:33019"/>
        <dbReference type="ChEBI" id="CHEBI:61560"/>
        <dbReference type="ChEBI" id="CHEBI:173112"/>
        <dbReference type="EC" id="2.7.7.7"/>
    </reaction>
</comment>
<comment type="subunit">
    <text evidence="1">The DNA polymerase holoenzyme is a complex that contains 10 different types of subunits. These subunits are organized into 3 functionally essential subassemblies: the pol III core, the beta sliding clamp processivity factor and the clamp-loading complex. The pol III core (subunits alpha, epsilon and theta) contains the polymerase and the 3'-5' exonuclease proofreading activities. The polymerase is tethered to the template via the sliding clamp processivity factor. The clamp-loading complex assembles the beta processivity factor onto the primer template and plays a central role in the organization and communication at the replication fork. This complex contains delta, delta', psi and chi, and copies of either or both of two different DnaX proteins, gamma and tau. The composition of the holoenzyme is, therefore: (alpha,epsilon,theta)[2]-(isoform:gamma/tau)[3]-delta,delta', psi,chi-beta[4] (By similarity).</text>
</comment>
<comment type="alternative products">
    <event type="ribosomal frameshifting"/>
    <isoform>
        <id>P74876-1</id>
        <name>tau</name>
        <sequence type="displayed"/>
    </isoform>
    <isoform>
        <id>P74876-2</id>
        <name>gamma</name>
        <sequence type="described" ref="VSP_042850"/>
    </isoform>
    <text>The production of the two protein products from this region is probably due to programmed ribosomal frameshifting.</text>
</comment>
<comment type="miscellaneous">
    <molecule>Isoform tau</molecule>
    <text>Produced by full-length translation of the dnaX gene.</text>
</comment>
<comment type="miscellaneous">
    <molecule>Isoform gamma</molecule>
    <text evidence="5">Probably formed by programmed ribosomal frameshifting to a premature stop codon in the -1 frame at codon 430.</text>
</comment>
<comment type="similarity">
    <text evidence="5">Belongs to the DnaX/STICHEL family.</text>
</comment>
<gene>
    <name type="primary">dnaX</name>
    <name type="synonym">dnaZ</name>
    <name type="synonym">dnaZX</name>
    <name type="ordered locus">STM0484</name>
</gene>
<accession>P74876</accession>
<accession>P74877</accession>